<name>ALMA6_EMIH1</name>
<sequence length="383" mass="42120">MGCAGSTLRSGASFEDSRLAAIEDSRFHEVGHHAQFEDSRLAAIEDSRFHEVGHHAQFDEGGRFKQLPPANDDAKLLVADHPSLGVIRLDYDYPPALGDVDHPGSFYYDVFYRVVPGLTFELCQSGELPDDVKQRFIDAITWLDEQGVAGITGDCGFFMYFQALARSVTSKPVFMSSLCQLPAVVCAYAADEHIALFTANGESLKPMRELIKKECGVDPDDTRFVIVGCEDVPGFEAVANGDRVDVDSVLPHLVRLAEDTVAKHAGTAKPIRAILFECTELPPYSDAVRAATRLPVFDSITCCNSMLASLMDNPRFGVNNWHLSWDGAHTAHRFGDNVPPHLKGKLVNREHPENVARWNASLAERSSFSSAQQESIGRGSREL</sequence>
<gene>
    <name evidence="2" type="primary">ALMA6</name>
    <name evidence="4" type="ORF">EMIHUDRAFT_111561</name>
</gene>
<comment type="function">
    <text evidence="1">Mediates cleavage of dimethylsulfoniopropionate (DMSP) into dimethyl sulfide (DMS) and acrylate. DMS is the principal form by which sulfur is transported from oceans to the atmosphere and is a key component of the ocean sulfur cycle.</text>
</comment>
<comment type="catalytic activity">
    <reaction evidence="1">
        <text>S,S-dimethyl-beta-propiothetin = acrylate + dimethyl sulfide + H(+)</text>
        <dbReference type="Rhea" id="RHEA:19965"/>
        <dbReference type="ChEBI" id="CHEBI:15378"/>
        <dbReference type="ChEBI" id="CHEBI:16457"/>
        <dbReference type="ChEBI" id="CHEBI:17437"/>
        <dbReference type="ChEBI" id="CHEBI:37080"/>
        <dbReference type="EC" id="4.4.1.3"/>
    </reaction>
</comment>
<comment type="subunit">
    <text evidence="1">Homotetramer.</text>
</comment>
<comment type="similarity">
    <text evidence="3">Belongs to the aspartate/glutamate racemases family. ALMA1 subfamily.</text>
</comment>
<feature type="chain" id="PRO_0000433893" description="Dimethylsulfoniopropionate lyase 6">
    <location>
        <begin position="1"/>
        <end position="383"/>
    </location>
</feature>
<organism>
    <name type="scientific">Emiliania huxleyi (strain CCMP1516)</name>
    <dbReference type="NCBI Taxonomy" id="280463"/>
    <lineage>
        <taxon>Eukaryota</taxon>
        <taxon>Haptista</taxon>
        <taxon>Haptophyta</taxon>
        <taxon>Prymnesiophyceae</taxon>
        <taxon>Isochrysidales</taxon>
        <taxon>Noelaerhabdaceae</taxon>
        <taxon>Emiliania</taxon>
    </lineage>
</organism>
<proteinExistence type="inferred from homology"/>
<dbReference type="EC" id="4.4.1.3" evidence="1"/>
<dbReference type="EMBL" id="KB864391">
    <property type="protein sequence ID" value="EOD33735.1"/>
    <property type="molecule type" value="Genomic_DNA"/>
</dbReference>
<dbReference type="RefSeq" id="XP_005786164.1">
    <property type="nucleotide sequence ID" value="XM_005786107.1"/>
</dbReference>
<dbReference type="SMR" id="R1F493"/>
<dbReference type="PaxDb" id="2903-EOD33735"/>
<dbReference type="EnsemblProtists" id="EOD33735">
    <property type="protein sequence ID" value="EOD33735"/>
    <property type="gene ID" value="EMIHUDRAFT_111561"/>
</dbReference>
<dbReference type="GeneID" id="17279005"/>
<dbReference type="KEGG" id="ehx:EMIHUDRAFT_111561"/>
<dbReference type="eggNOG" id="ENOG502RZWQ">
    <property type="taxonomic scope" value="Eukaryota"/>
</dbReference>
<dbReference type="HOGENOM" id="CLU_722474_0_0_1"/>
<dbReference type="Proteomes" id="UP000013827">
    <property type="component" value="Unassembled WGS sequence"/>
</dbReference>
<dbReference type="GO" id="GO:0047869">
    <property type="term" value="F:dimethylpropiothetin dethiomethylase activity"/>
    <property type="evidence" value="ECO:0007669"/>
    <property type="project" value="UniProtKB-EC"/>
</dbReference>
<reference key="1">
    <citation type="journal article" date="2013" name="Nature">
        <title>Pan genome of the phytoplankton Emiliania underpins its global distribution.</title>
        <authorList>
            <person name="Read B.A."/>
            <person name="Kegel J."/>
            <person name="Klute M.J."/>
            <person name="Kuo A."/>
            <person name="Lefebvre S.C."/>
            <person name="Maumus F."/>
            <person name="Mayer C."/>
            <person name="Miller J."/>
            <person name="Monier A."/>
            <person name="Salamov A."/>
            <person name="Young J."/>
            <person name="Aguilar M."/>
            <person name="Claverie J.M."/>
            <person name="Frickenhaus S."/>
            <person name="Gonzalez K."/>
            <person name="Herman E.K."/>
            <person name="Lin Y.C."/>
            <person name="Napier J."/>
            <person name="Ogata H."/>
            <person name="Sarno A.F."/>
            <person name="Shmutz J."/>
            <person name="Schroeder D."/>
            <person name="de Vargas C."/>
            <person name="Verret F."/>
            <person name="von Dassow P."/>
            <person name="Valentin K."/>
            <person name="Van de Peer Y."/>
            <person name="Wheeler G."/>
            <person name="Dacks J.B."/>
            <person name="Delwiche C.F."/>
            <person name="Dyhrman S.T."/>
            <person name="Glockner G."/>
            <person name="John U."/>
            <person name="Richards T."/>
            <person name="Worden A.Z."/>
            <person name="Zhang X."/>
            <person name="Grigoriev I.V."/>
            <person name="Allen A.E."/>
            <person name="Bidle K."/>
            <person name="Borodovsky M."/>
            <person name="Bowler C."/>
            <person name="Brownlee C."/>
            <person name="Cock J.M."/>
            <person name="Elias M."/>
            <person name="Gladyshev V.N."/>
            <person name="Groth M."/>
            <person name="Guda C."/>
            <person name="Hadaegh A."/>
            <person name="Iglesias-Rodriguez M.D."/>
            <person name="Jenkins J."/>
            <person name="Jones B.M."/>
            <person name="Lawson T."/>
            <person name="Leese F."/>
            <person name="Lindquist E."/>
            <person name="Lobanov A."/>
            <person name="Lomsadze A."/>
            <person name="Malik S.B."/>
            <person name="Marsh M.E."/>
            <person name="Mackinder L."/>
            <person name="Mock T."/>
            <person name="Mueller-Roeber B."/>
            <person name="Pagarete A."/>
            <person name="Parker M."/>
            <person name="Probert I."/>
            <person name="Quesneville H."/>
            <person name="Raines C."/>
            <person name="Rensing S.A."/>
            <person name="Riano-Pachon D.M."/>
            <person name="Richier S."/>
            <person name="Rokitta S."/>
            <person name="Shiraiwa Y."/>
            <person name="Soanes D.M."/>
            <person name="van der Giezen M."/>
            <person name="Wahlund T.M."/>
            <person name="Williams B."/>
            <person name="Wilson W."/>
            <person name="Wolfe G."/>
            <person name="Wurch L.L."/>
        </authorList>
    </citation>
    <scope>NUCLEOTIDE SEQUENCE [LARGE SCALE GENOMIC DNA]</scope>
    <source>
        <strain>CCMP1516</strain>
    </source>
</reference>
<reference key="2">
    <citation type="journal article" date="2015" name="Science">
        <title>Identification of the algal dimethyl sulfide-releasing enzyme: A missing link in the marine sulfur cycle.</title>
        <authorList>
            <person name="Alcolombri U."/>
            <person name="Ben-Dor S."/>
            <person name="Feldmesser E."/>
            <person name="Levin Y."/>
            <person name="Tawfik D.S."/>
            <person name="Vardi A."/>
        </authorList>
    </citation>
    <scope>IDENTIFICATION</scope>
</reference>
<evidence type="ECO:0000250" key="1">
    <source>
        <dbReference type="UniProtKB" id="P0DN21"/>
    </source>
</evidence>
<evidence type="ECO:0000303" key="2">
    <source>
    </source>
</evidence>
<evidence type="ECO:0000305" key="3"/>
<evidence type="ECO:0000312" key="4">
    <source>
        <dbReference type="EMBL" id="EOD33735.1"/>
    </source>
</evidence>
<protein>
    <recommendedName>
        <fullName evidence="3">Dimethylsulfoniopropionate lyase 6</fullName>
        <shortName evidence="3">DMSP lyase 6</shortName>
        <ecNumber evidence="1">4.4.1.3</ecNumber>
    </recommendedName>
    <alternativeName>
        <fullName evidence="3">Dimethylpropiothetin dethiomethylase 6</fullName>
    </alternativeName>
</protein>
<accession>R1F493</accession>
<keyword id="KW-0456">Lyase</keyword>
<keyword id="KW-1185">Reference proteome</keyword>